<proteinExistence type="evidence at transcript level"/>
<name>ELYS_HALCR</name>
<sequence>MKLLVLCVFAMMATLAVSRRYQFVQHQYIRKAFEVALKVEIIAGFDRTLVKWLRNHGRGLNENQRKVLYFVNRRYMQTHWQNYMLWIVKKTNALGRPPVVADYRALGAEIGRRIDMGYFYNFLKNRVMIPKYLPYMRRLNNMRPEDVPVANRNPGK</sequence>
<comment type="function">
    <text evidence="1">Creates a 3 um hole in the egg vitelline layer through which the sperm passes. Does not have enzyme activity. Species-specific interaction between the sperm protein lysin and the egg protein VERL exposes a basic surface on lysin that may dissociate the egg vitelline layer via electrostatic repulsion. Plays a role in ensuring species-specific fertilization.</text>
</comment>
<comment type="subunit">
    <text evidence="1">Monomer. Homodimer. Molecules associate into dimers and then rapidly dissociate again. Interacts (as a monomer) with the egg vitelline layer protein VERL (via VERL repeats); each VERL chain can bind multiple copies of lysin.</text>
</comment>
<comment type="subcellular location">
    <subcellularLocation>
        <location evidence="1">Cytoplasmic vesicle</location>
        <location evidence="1">Secretory vesicle</location>
        <location evidence="1">Acrosome lumen</location>
    </subcellularLocation>
</comment>
<comment type="tissue specificity">
    <text evidence="2">Sperm.</text>
</comment>
<dbReference type="EMBL" id="M59971">
    <property type="protein sequence ID" value="AAA29201.1"/>
    <property type="molecule type" value="mRNA"/>
</dbReference>
<dbReference type="SMR" id="Q01380"/>
<dbReference type="GO" id="GO:0043160">
    <property type="term" value="C:acrosomal lumen"/>
    <property type="evidence" value="ECO:0000250"/>
    <property type="project" value="UniProtKB"/>
</dbReference>
<dbReference type="GO" id="GO:0007338">
    <property type="term" value="P:single fertilization"/>
    <property type="evidence" value="ECO:0000250"/>
    <property type="project" value="UniProtKB"/>
</dbReference>
<dbReference type="CDD" id="cd00243">
    <property type="entry name" value="Lysin-Sp18"/>
    <property type="match status" value="1"/>
</dbReference>
<dbReference type="Gene3D" id="1.20.150.10">
    <property type="entry name" value="Fertilization protein"/>
    <property type="match status" value="1"/>
</dbReference>
<dbReference type="InterPro" id="IPR001379">
    <property type="entry name" value="Egg_lysin"/>
</dbReference>
<dbReference type="InterPro" id="IPR035916">
    <property type="entry name" value="Egg_lysin_sf"/>
</dbReference>
<dbReference type="Pfam" id="PF01303">
    <property type="entry name" value="Egg_lysin"/>
    <property type="match status" value="1"/>
</dbReference>
<dbReference type="PRINTS" id="PR01882">
    <property type="entry name" value="LYSIN"/>
</dbReference>
<dbReference type="SUPFAM" id="SSF47082">
    <property type="entry name" value="Fertilization protein"/>
    <property type="match status" value="1"/>
</dbReference>
<evidence type="ECO:0000250" key="1">
    <source>
        <dbReference type="UniProtKB" id="P04552"/>
    </source>
</evidence>
<evidence type="ECO:0000305" key="2"/>
<accession>Q01380</accession>
<reference key="1">
    <citation type="journal article" date="1992" name="Biol. Bull.">
        <title>The divergence of species-specific abalone sperm lysins is promoted by positive Darwinian selection.</title>
        <authorList>
            <person name="Lee Y.H."/>
            <person name="Vacquier V.D."/>
        </authorList>
    </citation>
    <scope>NUCLEOTIDE SEQUENCE [MRNA]</scope>
</reference>
<keyword id="KW-0968">Cytoplasmic vesicle</keyword>
<keyword id="KW-0278">Fertilization</keyword>
<keyword id="KW-0732">Signal</keyword>
<organism>
    <name type="scientific">Haliotis cracherodii</name>
    <name type="common">Black abalone</name>
    <dbReference type="NCBI Taxonomy" id="6455"/>
    <lineage>
        <taxon>Eukaryota</taxon>
        <taxon>Metazoa</taxon>
        <taxon>Spiralia</taxon>
        <taxon>Lophotrochozoa</taxon>
        <taxon>Mollusca</taxon>
        <taxon>Gastropoda</taxon>
        <taxon>Vetigastropoda</taxon>
        <taxon>Lepetellida</taxon>
        <taxon>Haliotoidea</taxon>
        <taxon>Haliotidae</taxon>
        <taxon>Haliotis</taxon>
    </lineage>
</organism>
<protein>
    <recommendedName>
        <fullName>Egg-lysin</fullName>
    </recommendedName>
    <alternativeName>
        <fullName>Sperm-lysin</fullName>
    </alternativeName>
</protein>
<feature type="signal peptide">
    <location>
        <begin position="1"/>
        <end position="18"/>
    </location>
</feature>
<feature type="chain" id="PRO_0000021167" description="Egg-lysin">
    <location>
        <begin position="19"/>
        <end position="156"/>
    </location>
</feature>